<dbReference type="EMBL" id="BC142871">
    <property type="protein sequence ID" value="AAI42872.1"/>
    <property type="molecule type" value="mRNA"/>
</dbReference>
<dbReference type="RefSeq" id="NP_001092236.1">
    <property type="nucleotide sequence ID" value="NM_001098766.1"/>
</dbReference>
<dbReference type="FunCoup" id="A5PLE2">
    <property type="interactions" value="100"/>
</dbReference>
<dbReference type="STRING" id="7955.ENSDARP00000104151"/>
<dbReference type="Ensembl" id="ENSDART00000114964">
    <property type="protein sequence ID" value="ENSDARP00000104151"/>
    <property type="gene ID" value="ENSDARG00000102482"/>
</dbReference>
<dbReference type="GeneID" id="100073329"/>
<dbReference type="KEGG" id="dre:100073329"/>
<dbReference type="AGR" id="ZFIN:ZDB-GENE-070615-27"/>
<dbReference type="ZFIN" id="ZDB-GENE-070615-27">
    <property type="gene designation" value="zgc:165573"/>
</dbReference>
<dbReference type="HOGENOM" id="CLU_155323_0_0_1"/>
<dbReference type="InParanoid" id="A5PLE2"/>
<dbReference type="OMA" id="NCLTACW"/>
<dbReference type="Reactome" id="R-DRE-6798695">
    <property type="pathway name" value="Neutrophil degranulation"/>
</dbReference>
<dbReference type="PRO" id="PR:A5PLE2"/>
<dbReference type="Proteomes" id="UP000000437">
    <property type="component" value="Chromosome 21"/>
</dbReference>
<dbReference type="Bgee" id="ENSDARG00000102482">
    <property type="expression patterns" value="Expressed in granulocyte and 21 other cell types or tissues"/>
</dbReference>
<dbReference type="GO" id="GO:0016020">
    <property type="term" value="C:membrane"/>
    <property type="evidence" value="ECO:0007669"/>
    <property type="project" value="UniProtKB-SubCell"/>
</dbReference>
<dbReference type="InterPro" id="IPR043240">
    <property type="entry name" value="CYSTM1-like"/>
</dbReference>
<dbReference type="PANTHER" id="PTHR47564">
    <property type="entry name" value="CYSTEINE-RICH AND TRANSMEMBRANE DOMAIN-CONTAINING PROTEIN 1"/>
    <property type="match status" value="1"/>
</dbReference>
<dbReference type="PANTHER" id="PTHR47564:SF1">
    <property type="entry name" value="CYSTEINE-RICH AND TRANSMEMBRANE DOMAIN-CONTAINING PROTEIN 1"/>
    <property type="match status" value="1"/>
</dbReference>
<comment type="subcellular location">
    <subcellularLocation>
        <location evidence="3">Membrane</location>
        <topology evidence="3">Single-pass membrane protein</topology>
    </subcellularLocation>
</comment>
<comment type="similarity">
    <text evidence="3">Belongs to the CYSTM1 family.</text>
</comment>
<name>CYTM1_DANRE</name>
<feature type="chain" id="PRO_0000365071" description="Cysteine-rich and transmembrane domain-containing protein 1">
    <location>
        <begin position="1"/>
        <end position="118"/>
    </location>
</feature>
<feature type="transmembrane region" description="Helical" evidence="1">
    <location>
        <begin position="95"/>
        <end position="112"/>
    </location>
</feature>
<feature type="region of interest" description="Disordered" evidence="2">
    <location>
        <begin position="1"/>
        <end position="82"/>
    </location>
</feature>
<feature type="compositionally biased region" description="Low complexity" evidence="2">
    <location>
        <begin position="1"/>
        <end position="54"/>
    </location>
</feature>
<feature type="compositionally biased region" description="Low complexity" evidence="2">
    <location>
        <begin position="64"/>
        <end position="74"/>
    </location>
</feature>
<reference key="1">
    <citation type="submission" date="2007-06" db="EMBL/GenBank/DDBJ databases">
        <authorList>
            <consortium name="NIH - Zebrafish Gene Collection (ZGC) project"/>
        </authorList>
    </citation>
    <scope>NUCLEOTIDE SEQUENCE [LARGE SCALE MRNA]</scope>
    <source>
        <tissue>Larva</tissue>
    </source>
</reference>
<gene>
    <name type="primary">cystm1</name>
    <name type="ORF">zgc:165573</name>
</gene>
<organism>
    <name type="scientific">Danio rerio</name>
    <name type="common">Zebrafish</name>
    <name type="synonym">Brachydanio rerio</name>
    <dbReference type="NCBI Taxonomy" id="7955"/>
    <lineage>
        <taxon>Eukaryota</taxon>
        <taxon>Metazoa</taxon>
        <taxon>Chordata</taxon>
        <taxon>Craniata</taxon>
        <taxon>Vertebrata</taxon>
        <taxon>Euteleostomi</taxon>
        <taxon>Actinopterygii</taxon>
        <taxon>Neopterygii</taxon>
        <taxon>Teleostei</taxon>
        <taxon>Ostariophysi</taxon>
        <taxon>Cypriniformes</taxon>
        <taxon>Danionidae</taxon>
        <taxon>Danioninae</taxon>
        <taxon>Danio</taxon>
    </lineage>
</organism>
<protein>
    <recommendedName>
        <fullName>Cysteine-rich and transmembrane domain-containing protein 1</fullName>
    </recommendedName>
</protein>
<sequence>MNYEQPPAYTGPGPAPGYPAQGYPAQGYPTQGYPAQGYPPQGYPAQGYPAQGYPNYPPGPPGPYTAQPGYQGYPQPGPPTNTVYVVEQGRRDDQSGEQACLATCWAALCCCCLCDMLT</sequence>
<proteinExistence type="inferred from homology"/>
<keyword id="KW-0472">Membrane</keyword>
<keyword id="KW-1185">Reference proteome</keyword>
<keyword id="KW-0812">Transmembrane</keyword>
<keyword id="KW-1133">Transmembrane helix</keyword>
<accession>A5PLE2</accession>
<evidence type="ECO:0000255" key="1"/>
<evidence type="ECO:0000256" key="2">
    <source>
        <dbReference type="SAM" id="MobiDB-lite"/>
    </source>
</evidence>
<evidence type="ECO:0000305" key="3"/>